<sequence>MAIKVLVVDDSSFFRRRVSEIINSDPRLEVIDVAVNGKEAVEKAKSLKPDVITMDIEMPVMDGISAVREIMKACPTPTLMFSSLTHDGAKATLDALDAGALDFLPKKFEDIARNRDEAVSLLQKRIAEIARKKSFMRRPVLSSQSTSTVESRTATTRTATSALTASPVKAAPAAPIAQRFKATGKKYQLTAIGTSTGGPVALQKILTAIPANYPHPIILVQHMPATFTAAFAARLNNLCKIQVKEAEDGDVLKPGCAYLAPGGLQMMVDGRPGASRLKILDGGERMNYKPCVDVTFGSAAKVYGDKVLSMILTGMGADGREGCRMLKAGGATIWSQDEQSCVVYGMPQAVDKAGLSSESLPLDRIAERMLVEVGLK</sequence>
<proteinExistence type="inferred from homology"/>
<name>CHEB_ALIF1</name>
<protein>
    <recommendedName>
        <fullName evidence="1">Protein-glutamate methylesterase/protein-glutamine glutaminase</fullName>
        <ecNumber evidence="1">3.1.1.61</ecNumber>
        <ecNumber evidence="1">3.5.1.44</ecNumber>
    </recommendedName>
</protein>
<feature type="chain" id="PRO_0000225489" description="Protein-glutamate methylesterase/protein-glutamine glutaminase">
    <location>
        <begin position="1"/>
        <end position="376"/>
    </location>
</feature>
<feature type="domain" description="Response regulatory" evidence="1">
    <location>
        <begin position="4"/>
        <end position="121"/>
    </location>
</feature>
<feature type="domain" description="CheB-type methylesterase" evidence="1">
    <location>
        <begin position="183"/>
        <end position="376"/>
    </location>
</feature>
<feature type="region of interest" description="Disordered" evidence="2">
    <location>
        <begin position="142"/>
        <end position="161"/>
    </location>
</feature>
<feature type="compositionally biased region" description="Low complexity" evidence="2">
    <location>
        <begin position="145"/>
        <end position="161"/>
    </location>
</feature>
<feature type="active site" evidence="1">
    <location>
        <position position="195"/>
    </location>
</feature>
<feature type="active site" evidence="1">
    <location>
        <position position="222"/>
    </location>
</feature>
<feature type="active site" evidence="1">
    <location>
        <position position="318"/>
    </location>
</feature>
<feature type="modified residue" description="4-aspartylphosphate" evidence="1">
    <location>
        <position position="55"/>
    </location>
</feature>
<gene>
    <name evidence="1" type="primary">cheB</name>
    <name type="ordered locus">VF_1830</name>
</gene>
<evidence type="ECO:0000255" key="1">
    <source>
        <dbReference type="HAMAP-Rule" id="MF_00099"/>
    </source>
</evidence>
<evidence type="ECO:0000256" key="2">
    <source>
        <dbReference type="SAM" id="MobiDB-lite"/>
    </source>
</evidence>
<comment type="function">
    <text evidence="1">Involved in chemotaxis. Part of a chemotaxis signal transduction system that modulates chemotaxis in response to various stimuli. Catalyzes the demethylation of specific methylglutamate residues introduced into the chemoreceptors (methyl-accepting chemotaxis proteins or MCP) by CheR. Also mediates the irreversible deamidation of specific glutamine residues to glutamic acid.</text>
</comment>
<comment type="catalytic activity">
    <reaction evidence="1">
        <text>[protein]-L-glutamate 5-O-methyl ester + H2O = L-glutamyl-[protein] + methanol + H(+)</text>
        <dbReference type="Rhea" id="RHEA:23236"/>
        <dbReference type="Rhea" id="RHEA-COMP:10208"/>
        <dbReference type="Rhea" id="RHEA-COMP:10311"/>
        <dbReference type="ChEBI" id="CHEBI:15377"/>
        <dbReference type="ChEBI" id="CHEBI:15378"/>
        <dbReference type="ChEBI" id="CHEBI:17790"/>
        <dbReference type="ChEBI" id="CHEBI:29973"/>
        <dbReference type="ChEBI" id="CHEBI:82795"/>
        <dbReference type="EC" id="3.1.1.61"/>
    </reaction>
</comment>
<comment type="catalytic activity">
    <reaction evidence="1">
        <text>L-glutaminyl-[protein] + H2O = L-glutamyl-[protein] + NH4(+)</text>
        <dbReference type="Rhea" id="RHEA:16441"/>
        <dbReference type="Rhea" id="RHEA-COMP:10207"/>
        <dbReference type="Rhea" id="RHEA-COMP:10208"/>
        <dbReference type="ChEBI" id="CHEBI:15377"/>
        <dbReference type="ChEBI" id="CHEBI:28938"/>
        <dbReference type="ChEBI" id="CHEBI:29973"/>
        <dbReference type="ChEBI" id="CHEBI:30011"/>
        <dbReference type="EC" id="3.5.1.44"/>
    </reaction>
</comment>
<comment type="subcellular location">
    <subcellularLocation>
        <location evidence="1">Cytoplasm</location>
    </subcellularLocation>
</comment>
<comment type="domain">
    <text evidence="1">Contains a C-terminal catalytic domain, and an N-terminal region which modulates catalytic activity.</text>
</comment>
<comment type="PTM">
    <text evidence="1">Phosphorylated by CheA. Phosphorylation of the N-terminal regulatory domain activates the methylesterase activity.</text>
</comment>
<comment type="similarity">
    <text evidence="1">Belongs to the CheB family.</text>
</comment>
<keyword id="KW-0145">Chemotaxis</keyword>
<keyword id="KW-0963">Cytoplasm</keyword>
<keyword id="KW-0378">Hydrolase</keyword>
<keyword id="KW-0597">Phosphoprotein</keyword>
<keyword id="KW-1185">Reference proteome</keyword>
<reference key="1">
    <citation type="journal article" date="2005" name="Proc. Natl. Acad. Sci. U.S.A.">
        <title>Complete genome sequence of Vibrio fischeri: a symbiotic bacterium with pathogenic congeners.</title>
        <authorList>
            <person name="Ruby E.G."/>
            <person name="Urbanowski M."/>
            <person name="Campbell J."/>
            <person name="Dunn A."/>
            <person name="Faini M."/>
            <person name="Gunsalus R."/>
            <person name="Lostroh P."/>
            <person name="Lupp C."/>
            <person name="McCann J."/>
            <person name="Millikan D."/>
            <person name="Schaefer A."/>
            <person name="Stabb E."/>
            <person name="Stevens A."/>
            <person name="Visick K."/>
            <person name="Whistler C."/>
            <person name="Greenberg E.P."/>
        </authorList>
    </citation>
    <scope>NUCLEOTIDE SEQUENCE [LARGE SCALE GENOMIC DNA]</scope>
    <source>
        <strain>ATCC 700601 / ES114</strain>
    </source>
</reference>
<organism>
    <name type="scientific">Aliivibrio fischeri (strain ATCC 700601 / ES114)</name>
    <name type="common">Vibrio fischeri</name>
    <dbReference type="NCBI Taxonomy" id="312309"/>
    <lineage>
        <taxon>Bacteria</taxon>
        <taxon>Pseudomonadati</taxon>
        <taxon>Pseudomonadota</taxon>
        <taxon>Gammaproteobacteria</taxon>
        <taxon>Vibrionales</taxon>
        <taxon>Vibrionaceae</taxon>
        <taxon>Aliivibrio</taxon>
    </lineage>
</organism>
<accession>Q5E3S1</accession>
<dbReference type="EC" id="3.1.1.61" evidence="1"/>
<dbReference type="EC" id="3.5.1.44" evidence="1"/>
<dbReference type="EMBL" id="CP000020">
    <property type="protein sequence ID" value="AAW86325.1"/>
    <property type="molecule type" value="Genomic_DNA"/>
</dbReference>
<dbReference type="RefSeq" id="WP_005420308.1">
    <property type="nucleotide sequence ID" value="NZ_CAWLES010000001.1"/>
</dbReference>
<dbReference type="RefSeq" id="YP_205213.1">
    <property type="nucleotide sequence ID" value="NC_006840.2"/>
</dbReference>
<dbReference type="SMR" id="Q5E3S1"/>
<dbReference type="STRING" id="312309.VF_1830"/>
<dbReference type="EnsemblBacteria" id="AAW86325">
    <property type="protein sequence ID" value="AAW86325"/>
    <property type="gene ID" value="VF_1830"/>
</dbReference>
<dbReference type="GeneID" id="54164529"/>
<dbReference type="KEGG" id="vfi:VF_1830"/>
<dbReference type="PATRIC" id="fig|312309.11.peg.1857"/>
<dbReference type="eggNOG" id="COG2201">
    <property type="taxonomic scope" value="Bacteria"/>
</dbReference>
<dbReference type="HOGENOM" id="CLU_000445_51_0_6"/>
<dbReference type="OrthoDB" id="9793421at2"/>
<dbReference type="Proteomes" id="UP000000537">
    <property type="component" value="Chromosome I"/>
</dbReference>
<dbReference type="GO" id="GO:0005737">
    <property type="term" value="C:cytoplasm"/>
    <property type="evidence" value="ECO:0007669"/>
    <property type="project" value="UniProtKB-SubCell"/>
</dbReference>
<dbReference type="GO" id="GO:0000156">
    <property type="term" value="F:phosphorelay response regulator activity"/>
    <property type="evidence" value="ECO:0007669"/>
    <property type="project" value="InterPro"/>
</dbReference>
<dbReference type="GO" id="GO:0008984">
    <property type="term" value="F:protein-glutamate methylesterase activity"/>
    <property type="evidence" value="ECO:0007669"/>
    <property type="project" value="UniProtKB-UniRule"/>
</dbReference>
<dbReference type="GO" id="GO:0050568">
    <property type="term" value="F:protein-glutamine glutaminase activity"/>
    <property type="evidence" value="ECO:0007669"/>
    <property type="project" value="UniProtKB-UniRule"/>
</dbReference>
<dbReference type="GO" id="GO:0006935">
    <property type="term" value="P:chemotaxis"/>
    <property type="evidence" value="ECO:0007669"/>
    <property type="project" value="UniProtKB-UniRule"/>
</dbReference>
<dbReference type="CDD" id="cd16432">
    <property type="entry name" value="CheB_Rec"/>
    <property type="match status" value="1"/>
</dbReference>
<dbReference type="CDD" id="cd17541">
    <property type="entry name" value="REC_CheB-like"/>
    <property type="match status" value="1"/>
</dbReference>
<dbReference type="FunFam" id="3.40.50.2300:FF:000077">
    <property type="entry name" value="Chemotaxis response regulator"/>
    <property type="match status" value="1"/>
</dbReference>
<dbReference type="FunFam" id="3.40.50.180:FF:000001">
    <property type="entry name" value="Protein-glutamate methylesterase/protein-glutamine glutaminase"/>
    <property type="match status" value="1"/>
</dbReference>
<dbReference type="Gene3D" id="3.40.50.2300">
    <property type="match status" value="1"/>
</dbReference>
<dbReference type="Gene3D" id="3.40.50.180">
    <property type="entry name" value="Methylesterase CheB, C-terminal domain"/>
    <property type="match status" value="1"/>
</dbReference>
<dbReference type="HAMAP" id="MF_00099">
    <property type="entry name" value="CheB_chemtxs"/>
    <property type="match status" value="1"/>
</dbReference>
<dbReference type="InterPro" id="IPR008248">
    <property type="entry name" value="CheB-like"/>
</dbReference>
<dbReference type="InterPro" id="IPR035909">
    <property type="entry name" value="CheB_C"/>
</dbReference>
<dbReference type="InterPro" id="IPR011006">
    <property type="entry name" value="CheY-like_superfamily"/>
</dbReference>
<dbReference type="InterPro" id="IPR000673">
    <property type="entry name" value="Sig_transdc_resp-reg_Me-estase"/>
</dbReference>
<dbReference type="InterPro" id="IPR001789">
    <property type="entry name" value="Sig_transdc_resp-reg_receiver"/>
</dbReference>
<dbReference type="NCBIfam" id="NF001965">
    <property type="entry name" value="PRK00742.1"/>
    <property type="match status" value="1"/>
</dbReference>
<dbReference type="PANTHER" id="PTHR42872">
    <property type="entry name" value="PROTEIN-GLUTAMATE METHYLESTERASE/PROTEIN-GLUTAMINE GLUTAMINASE"/>
    <property type="match status" value="1"/>
</dbReference>
<dbReference type="PANTHER" id="PTHR42872:SF3">
    <property type="entry name" value="PROTEIN-GLUTAMATE METHYLESTERASE_PROTEIN-GLUTAMINE GLUTAMINASE 1"/>
    <property type="match status" value="1"/>
</dbReference>
<dbReference type="Pfam" id="PF01339">
    <property type="entry name" value="CheB_methylest"/>
    <property type="match status" value="1"/>
</dbReference>
<dbReference type="Pfam" id="PF00072">
    <property type="entry name" value="Response_reg"/>
    <property type="match status" value="1"/>
</dbReference>
<dbReference type="PIRSF" id="PIRSF000876">
    <property type="entry name" value="RR_chemtxs_CheB"/>
    <property type="match status" value="1"/>
</dbReference>
<dbReference type="SMART" id="SM00448">
    <property type="entry name" value="REC"/>
    <property type="match status" value="1"/>
</dbReference>
<dbReference type="SUPFAM" id="SSF52172">
    <property type="entry name" value="CheY-like"/>
    <property type="match status" value="1"/>
</dbReference>
<dbReference type="SUPFAM" id="SSF52738">
    <property type="entry name" value="Methylesterase CheB, C-terminal domain"/>
    <property type="match status" value="1"/>
</dbReference>
<dbReference type="PROSITE" id="PS50122">
    <property type="entry name" value="CHEB"/>
    <property type="match status" value="1"/>
</dbReference>
<dbReference type="PROSITE" id="PS50110">
    <property type="entry name" value="RESPONSE_REGULATORY"/>
    <property type="match status" value="1"/>
</dbReference>